<organism>
    <name type="scientific">Corynebacterium glutamicum (strain ATCC 13032 / DSM 20300 / JCM 1318 / BCRC 11384 / CCUG 27702 / LMG 3730 / NBRC 12168 / NCIMB 10025 / NRRL B-2784 / 534)</name>
    <dbReference type="NCBI Taxonomy" id="196627"/>
    <lineage>
        <taxon>Bacteria</taxon>
        <taxon>Bacillati</taxon>
        <taxon>Actinomycetota</taxon>
        <taxon>Actinomycetes</taxon>
        <taxon>Mycobacteriales</taxon>
        <taxon>Corynebacteriaceae</taxon>
        <taxon>Corynebacterium</taxon>
    </lineage>
</organism>
<reference key="1">
    <citation type="journal article" date="1993" name="DNA Seq.">
        <title>Analysis of the biotin biosynthesis pathway in coryneform bacteria: cloning and sequencing of the bioB gene from Brevibacterium flavum.</title>
        <authorList>
            <person name="Hatakeyama K."/>
            <person name="Kohama K."/>
            <person name="Vertes A.A."/>
            <person name="Kobayashi M."/>
            <person name="Kurusu Y."/>
            <person name="Yukawa H."/>
        </authorList>
    </citation>
    <scope>NUCLEOTIDE SEQUENCE [GENOMIC DNA]</scope>
    <source>
        <strain>MJ233</strain>
    </source>
</reference>
<reference key="2">
    <citation type="journal article" date="1996" name="Gene">
        <title>Two new members of the bio B superfamily: cloning, sequencing and expression of bio B genes of Methylobacillus flagellatum and Corynebacterium glutamicum.</title>
        <authorList>
            <person name="Serebriiskii I.G."/>
            <person name="Vassin V.M."/>
            <person name="Tsygankov Y.D."/>
        </authorList>
    </citation>
    <scope>NUCLEOTIDE SEQUENCE [GENOMIC DNA]</scope>
    <source>
        <strain>ATCC 13032 / DSM 20300 / JCM 1318 / BCRC 11384 / CCUG 27702 / LMG 3730 / NBRC 12168 / NCIMB 10025 / NRRL B-2784 / 534</strain>
    </source>
</reference>
<reference key="3">
    <citation type="journal article" date="2003" name="Appl. Microbiol. Biotechnol.">
        <title>The Corynebacterium glutamicum genome: features and impacts on biotechnological processes.</title>
        <authorList>
            <person name="Ikeda M."/>
            <person name="Nakagawa S."/>
        </authorList>
    </citation>
    <scope>NUCLEOTIDE SEQUENCE [LARGE SCALE GENOMIC DNA]</scope>
    <source>
        <strain>ATCC 13032 / DSM 20300 / JCM 1318 / BCRC 11384 / CCUG 27702 / LMG 3730 / NBRC 12168 / NCIMB 10025 / NRRL B-2784 / 534</strain>
    </source>
</reference>
<reference key="4">
    <citation type="journal article" date="2003" name="J. Biotechnol.">
        <title>The complete Corynebacterium glutamicum ATCC 13032 genome sequence and its impact on the production of L-aspartate-derived amino acids and vitamins.</title>
        <authorList>
            <person name="Kalinowski J."/>
            <person name="Bathe B."/>
            <person name="Bartels D."/>
            <person name="Bischoff N."/>
            <person name="Bott M."/>
            <person name="Burkovski A."/>
            <person name="Dusch N."/>
            <person name="Eggeling L."/>
            <person name="Eikmanns B.J."/>
            <person name="Gaigalat L."/>
            <person name="Goesmann A."/>
            <person name="Hartmann M."/>
            <person name="Huthmacher K."/>
            <person name="Kraemer R."/>
            <person name="Linke B."/>
            <person name="McHardy A.C."/>
            <person name="Meyer F."/>
            <person name="Moeckel B."/>
            <person name="Pfefferle W."/>
            <person name="Puehler A."/>
            <person name="Rey D.A."/>
            <person name="Rueckert C."/>
            <person name="Rupp O."/>
            <person name="Sahm H."/>
            <person name="Wendisch V.F."/>
            <person name="Wiegraebe I."/>
            <person name="Tauch A."/>
        </authorList>
    </citation>
    <scope>NUCLEOTIDE SEQUENCE [LARGE SCALE GENOMIC DNA]</scope>
    <source>
        <strain>ATCC 13032 / DSM 20300 / JCM 1318 / BCRC 11384 / CCUG 27702 / LMG 3730 / NBRC 12168 / NCIMB 10025 / NRRL B-2784 / 534</strain>
    </source>
</reference>
<dbReference type="EC" id="2.8.1.6" evidence="1"/>
<dbReference type="EMBL" id="D14084">
    <property type="protein sequence ID" value="BAA03169.1"/>
    <property type="molecule type" value="Genomic_DNA"/>
</dbReference>
<dbReference type="EMBL" id="U31281">
    <property type="protein sequence ID" value="AAC44580.1"/>
    <property type="molecule type" value="Genomic_DNA"/>
</dbReference>
<dbReference type="EMBL" id="BA000036">
    <property type="protein sequence ID" value="BAB97465.1"/>
    <property type="molecule type" value="Genomic_DNA"/>
</dbReference>
<dbReference type="EMBL" id="BX927148">
    <property type="protein sequence ID" value="CAF18640.1"/>
    <property type="molecule type" value="Genomic_DNA"/>
</dbReference>
<dbReference type="PIR" id="I40338">
    <property type="entry name" value="I40338"/>
</dbReference>
<dbReference type="PIR" id="JC5084">
    <property type="entry name" value="JC5084"/>
</dbReference>
<dbReference type="RefSeq" id="NP_599324.1">
    <property type="nucleotide sequence ID" value="NC_003450.3"/>
</dbReference>
<dbReference type="RefSeq" id="WP_003861135.1">
    <property type="nucleotide sequence ID" value="NC_006958.1"/>
</dbReference>
<dbReference type="SMR" id="P46396"/>
<dbReference type="STRING" id="196627.cg0095"/>
<dbReference type="GeneID" id="1021113"/>
<dbReference type="KEGG" id="cgb:cg0095"/>
<dbReference type="KEGG" id="cgl:Cgl0072"/>
<dbReference type="PATRIC" id="fig|196627.13.peg.73"/>
<dbReference type="eggNOG" id="COG0502">
    <property type="taxonomic scope" value="Bacteria"/>
</dbReference>
<dbReference type="HOGENOM" id="CLU_033172_2_1_11"/>
<dbReference type="OrthoDB" id="9786826at2"/>
<dbReference type="BioCyc" id="CORYNE:G18NG-9618-MONOMER"/>
<dbReference type="BRENDA" id="2.8.1.6">
    <property type="organism ID" value="960"/>
</dbReference>
<dbReference type="UniPathway" id="UPA00078">
    <property type="reaction ID" value="UER00162"/>
</dbReference>
<dbReference type="Proteomes" id="UP000000582">
    <property type="component" value="Chromosome"/>
</dbReference>
<dbReference type="Proteomes" id="UP000001009">
    <property type="component" value="Chromosome"/>
</dbReference>
<dbReference type="GO" id="GO:0051537">
    <property type="term" value="F:2 iron, 2 sulfur cluster binding"/>
    <property type="evidence" value="ECO:0007669"/>
    <property type="project" value="UniProtKB-KW"/>
</dbReference>
<dbReference type="GO" id="GO:0051539">
    <property type="term" value="F:4 iron, 4 sulfur cluster binding"/>
    <property type="evidence" value="ECO:0007669"/>
    <property type="project" value="UniProtKB-KW"/>
</dbReference>
<dbReference type="GO" id="GO:0004076">
    <property type="term" value="F:biotin synthase activity"/>
    <property type="evidence" value="ECO:0007669"/>
    <property type="project" value="UniProtKB-UniRule"/>
</dbReference>
<dbReference type="GO" id="GO:0005506">
    <property type="term" value="F:iron ion binding"/>
    <property type="evidence" value="ECO:0007669"/>
    <property type="project" value="UniProtKB-UniRule"/>
</dbReference>
<dbReference type="GO" id="GO:0009102">
    <property type="term" value="P:biotin biosynthetic process"/>
    <property type="evidence" value="ECO:0007669"/>
    <property type="project" value="UniProtKB-UniRule"/>
</dbReference>
<dbReference type="CDD" id="cd01335">
    <property type="entry name" value="Radical_SAM"/>
    <property type="match status" value="1"/>
</dbReference>
<dbReference type="FunFam" id="3.20.20.70:FF:000026">
    <property type="entry name" value="Biotin synthase"/>
    <property type="match status" value="1"/>
</dbReference>
<dbReference type="Gene3D" id="3.20.20.70">
    <property type="entry name" value="Aldolase class I"/>
    <property type="match status" value="1"/>
</dbReference>
<dbReference type="HAMAP" id="MF_01694">
    <property type="entry name" value="BioB"/>
    <property type="match status" value="1"/>
</dbReference>
<dbReference type="InterPro" id="IPR013785">
    <property type="entry name" value="Aldolase_TIM"/>
</dbReference>
<dbReference type="InterPro" id="IPR010722">
    <property type="entry name" value="BATS_dom"/>
</dbReference>
<dbReference type="InterPro" id="IPR002684">
    <property type="entry name" value="Biotin_synth/BioAB"/>
</dbReference>
<dbReference type="InterPro" id="IPR024177">
    <property type="entry name" value="Biotin_synthase"/>
</dbReference>
<dbReference type="InterPro" id="IPR006638">
    <property type="entry name" value="Elp3/MiaA/NifB-like_rSAM"/>
</dbReference>
<dbReference type="InterPro" id="IPR007197">
    <property type="entry name" value="rSAM"/>
</dbReference>
<dbReference type="NCBIfam" id="TIGR00433">
    <property type="entry name" value="bioB"/>
    <property type="match status" value="1"/>
</dbReference>
<dbReference type="PANTHER" id="PTHR22976">
    <property type="entry name" value="BIOTIN SYNTHASE"/>
    <property type="match status" value="1"/>
</dbReference>
<dbReference type="PANTHER" id="PTHR22976:SF2">
    <property type="entry name" value="BIOTIN SYNTHASE, MITOCHONDRIAL"/>
    <property type="match status" value="1"/>
</dbReference>
<dbReference type="Pfam" id="PF06968">
    <property type="entry name" value="BATS"/>
    <property type="match status" value="1"/>
</dbReference>
<dbReference type="Pfam" id="PF04055">
    <property type="entry name" value="Radical_SAM"/>
    <property type="match status" value="1"/>
</dbReference>
<dbReference type="PIRSF" id="PIRSF001619">
    <property type="entry name" value="Biotin_synth"/>
    <property type="match status" value="1"/>
</dbReference>
<dbReference type="SFLD" id="SFLDG01082">
    <property type="entry name" value="B12-binding_domain_containing"/>
    <property type="match status" value="1"/>
</dbReference>
<dbReference type="SFLD" id="SFLDG01060">
    <property type="entry name" value="BATS_domain_containing"/>
    <property type="match status" value="1"/>
</dbReference>
<dbReference type="SFLD" id="SFLDG01278">
    <property type="entry name" value="biotin_synthase_like"/>
    <property type="match status" value="1"/>
</dbReference>
<dbReference type="SMART" id="SM00876">
    <property type="entry name" value="BATS"/>
    <property type="match status" value="1"/>
</dbReference>
<dbReference type="SMART" id="SM00729">
    <property type="entry name" value="Elp3"/>
    <property type="match status" value="1"/>
</dbReference>
<dbReference type="SUPFAM" id="SSF102114">
    <property type="entry name" value="Radical SAM enzymes"/>
    <property type="match status" value="1"/>
</dbReference>
<dbReference type="PROSITE" id="PS51918">
    <property type="entry name" value="RADICAL_SAM"/>
    <property type="match status" value="1"/>
</dbReference>
<feature type="chain" id="PRO_0000185551" description="Biotin synthase">
    <location>
        <begin position="1"/>
        <end position="334"/>
    </location>
</feature>
<feature type="domain" description="Radical SAM core" evidence="2">
    <location>
        <begin position="55"/>
        <end position="280"/>
    </location>
</feature>
<feature type="binding site" evidence="1">
    <location>
        <position position="70"/>
    </location>
    <ligand>
        <name>[4Fe-4S] cluster</name>
        <dbReference type="ChEBI" id="CHEBI:49883"/>
        <note>4Fe-4S-S-AdoMet</note>
    </ligand>
</feature>
<feature type="binding site" evidence="1">
    <location>
        <position position="74"/>
    </location>
    <ligand>
        <name>[4Fe-4S] cluster</name>
        <dbReference type="ChEBI" id="CHEBI:49883"/>
        <note>4Fe-4S-S-AdoMet</note>
    </ligand>
</feature>
<feature type="binding site" evidence="1">
    <location>
        <position position="77"/>
    </location>
    <ligand>
        <name>[4Fe-4S] cluster</name>
        <dbReference type="ChEBI" id="CHEBI:49883"/>
        <note>4Fe-4S-S-AdoMet</note>
    </ligand>
</feature>
<feature type="binding site" evidence="1">
    <location>
        <position position="113"/>
    </location>
    <ligand>
        <name>[2Fe-2S] cluster</name>
        <dbReference type="ChEBI" id="CHEBI:190135"/>
    </ligand>
</feature>
<feature type="binding site" evidence="1">
    <location>
        <position position="205"/>
    </location>
    <ligand>
        <name>[2Fe-2S] cluster</name>
        <dbReference type="ChEBI" id="CHEBI:190135"/>
    </ligand>
</feature>
<feature type="binding site" evidence="1">
    <location>
        <position position="275"/>
    </location>
    <ligand>
        <name>[2Fe-2S] cluster</name>
        <dbReference type="ChEBI" id="CHEBI:190135"/>
    </ligand>
</feature>
<feature type="sequence conflict" description="In Ref. 1 and 2." evidence="3" ref="1 2">
    <original>G</original>
    <variation>A</variation>
    <location>
        <position position="5"/>
    </location>
</feature>
<feature type="sequence conflict" description="In Ref. 1; BAA03169." evidence="3" ref="1">
    <original>R</original>
    <variation>A</variation>
    <location>
        <position position="88"/>
    </location>
</feature>
<feature type="sequence conflict" description="In Ref. 1; BAA03169." evidence="3" ref="1">
    <original>CI</original>
    <variation>DF</variation>
    <location>
        <begin position="113"/>
        <end position="114"/>
    </location>
</feature>
<feature type="sequence conflict" description="In Ref. 1 and 2." evidence="3" ref="1 2">
    <original>H</original>
    <variation>D</variation>
    <location>
        <position position="232"/>
    </location>
</feature>
<feature type="sequence conflict" description="In Ref. 1; BAA03169." evidence="3" ref="1">
    <original>R</original>
    <variation>A</variation>
    <location>
        <position position="260"/>
    </location>
</feature>
<evidence type="ECO:0000255" key="1">
    <source>
        <dbReference type="HAMAP-Rule" id="MF_01694"/>
    </source>
</evidence>
<evidence type="ECO:0000255" key="2">
    <source>
        <dbReference type="PROSITE-ProRule" id="PRU01266"/>
    </source>
</evidence>
<evidence type="ECO:0000305" key="3"/>
<protein>
    <recommendedName>
        <fullName evidence="1">Biotin synthase</fullName>
        <ecNumber evidence="1">2.8.1.6</ecNumber>
    </recommendedName>
</protein>
<name>BIOB_CORGL</name>
<gene>
    <name evidence="1" type="primary">bioB</name>
    <name type="ordered locus">Cgl0072</name>
    <name type="ordered locus">cg0095</name>
</gene>
<accession>P46396</accession>
<accession>P94636</accession>
<comment type="function">
    <text evidence="1">Catalyzes the conversion of dethiobiotin (DTB) to biotin by the insertion of a sulfur atom into dethiobiotin via a radical-based mechanism.</text>
</comment>
<comment type="catalytic activity">
    <reaction evidence="1">
        <text>(4R,5S)-dethiobiotin + (sulfur carrier)-SH + 2 reduced [2Fe-2S]-[ferredoxin] + 2 S-adenosyl-L-methionine = (sulfur carrier)-H + biotin + 2 5'-deoxyadenosine + 2 L-methionine + 2 oxidized [2Fe-2S]-[ferredoxin]</text>
        <dbReference type="Rhea" id="RHEA:22060"/>
        <dbReference type="Rhea" id="RHEA-COMP:10000"/>
        <dbReference type="Rhea" id="RHEA-COMP:10001"/>
        <dbReference type="Rhea" id="RHEA-COMP:14737"/>
        <dbReference type="Rhea" id="RHEA-COMP:14739"/>
        <dbReference type="ChEBI" id="CHEBI:17319"/>
        <dbReference type="ChEBI" id="CHEBI:29917"/>
        <dbReference type="ChEBI" id="CHEBI:33737"/>
        <dbReference type="ChEBI" id="CHEBI:33738"/>
        <dbReference type="ChEBI" id="CHEBI:57586"/>
        <dbReference type="ChEBI" id="CHEBI:57844"/>
        <dbReference type="ChEBI" id="CHEBI:59789"/>
        <dbReference type="ChEBI" id="CHEBI:64428"/>
        <dbReference type="ChEBI" id="CHEBI:149473"/>
        <dbReference type="EC" id="2.8.1.6"/>
    </reaction>
</comment>
<comment type="cofactor">
    <cofactor evidence="1">
        <name>[4Fe-4S] cluster</name>
        <dbReference type="ChEBI" id="CHEBI:49883"/>
    </cofactor>
    <text evidence="1">Binds 1 [4Fe-4S] cluster. The cluster is coordinated with 3 cysteines and an exchangeable S-adenosyl-L-methionine.</text>
</comment>
<comment type="cofactor">
    <cofactor evidence="1">
        <name>[2Fe-2S] cluster</name>
        <dbReference type="ChEBI" id="CHEBI:190135"/>
    </cofactor>
    <text evidence="1">Binds 1 [2Fe-2S] cluster. The cluster is coordinated with 3 cysteines and 1 arginine.</text>
</comment>
<comment type="pathway">
    <text evidence="1">Cofactor biosynthesis; biotin biosynthesis; biotin from 7,8-diaminononanoate: step 2/2.</text>
</comment>
<comment type="subunit">
    <text evidence="1">Homodimer.</text>
</comment>
<comment type="similarity">
    <text evidence="1">Belongs to the radical SAM superfamily. Biotin synthase family.</text>
</comment>
<keyword id="KW-0001">2Fe-2S</keyword>
<keyword id="KW-0004">4Fe-4S</keyword>
<keyword id="KW-0093">Biotin biosynthesis</keyword>
<keyword id="KW-0408">Iron</keyword>
<keyword id="KW-0411">Iron-sulfur</keyword>
<keyword id="KW-0479">Metal-binding</keyword>
<keyword id="KW-1185">Reference proteome</keyword>
<keyword id="KW-0949">S-adenosyl-L-methionine</keyword>
<keyword id="KW-0808">Transferase</keyword>
<sequence length="334" mass="36856">MTIPGTILDTARTQVLEQGIGLNQQQLMEVLTLPEEQIPDLMELAHQVRLKWCGEEIEVEGIISLKTGGCPEDCHFCSQSGLFESPVRSVWLDIPNLVEAAKQTAKTGATEFCIVAAVKGPDERLMTQLEEAVLAIHSEVEIEVAASIGTLNKEQVDRLAAAGVHRYNHNLETARSYFPEVVTTHTWEERRETLRLVAEAGMEVCSGGILGMGETLEQRAEFAVQLAELDPHEVPMNFLDPRPGTPFADRELMDSRDALRSIGAFRLAMPHTMLRFAGGRELTLGDKGSEQALLGGINAMIVGNYLTTLGRPMEDDLDMMDRLQLPIKVLNKVI</sequence>
<proteinExistence type="inferred from homology"/>